<accession>A4Y803</accession>
<evidence type="ECO:0000255" key="1">
    <source>
        <dbReference type="HAMAP-Rule" id="MF_00509"/>
    </source>
</evidence>
<evidence type="ECO:0000256" key="2">
    <source>
        <dbReference type="SAM" id="MobiDB-lite"/>
    </source>
</evidence>
<reference key="1">
    <citation type="submission" date="2007-04" db="EMBL/GenBank/DDBJ databases">
        <title>Complete sequence of Shewanella putrefaciens CN-32.</title>
        <authorList>
            <consortium name="US DOE Joint Genome Institute"/>
            <person name="Copeland A."/>
            <person name="Lucas S."/>
            <person name="Lapidus A."/>
            <person name="Barry K."/>
            <person name="Detter J.C."/>
            <person name="Glavina del Rio T."/>
            <person name="Hammon N."/>
            <person name="Israni S."/>
            <person name="Dalin E."/>
            <person name="Tice H."/>
            <person name="Pitluck S."/>
            <person name="Chain P."/>
            <person name="Malfatti S."/>
            <person name="Shin M."/>
            <person name="Vergez L."/>
            <person name="Schmutz J."/>
            <person name="Larimer F."/>
            <person name="Land M."/>
            <person name="Hauser L."/>
            <person name="Kyrpides N."/>
            <person name="Mikhailova N."/>
            <person name="Romine M.F."/>
            <person name="Fredrickson J."/>
            <person name="Tiedje J."/>
            <person name="Richardson P."/>
        </authorList>
    </citation>
    <scope>NUCLEOTIDE SEQUENCE [LARGE SCALE GENOMIC DNA]</scope>
    <source>
        <strain>CN-32 / ATCC BAA-453</strain>
    </source>
</reference>
<name>ZIPA_SHEPC</name>
<keyword id="KW-0131">Cell cycle</keyword>
<keyword id="KW-0132">Cell division</keyword>
<keyword id="KW-0997">Cell inner membrane</keyword>
<keyword id="KW-1003">Cell membrane</keyword>
<keyword id="KW-0472">Membrane</keyword>
<keyword id="KW-0812">Transmembrane</keyword>
<keyword id="KW-1133">Transmembrane helix</keyword>
<comment type="function">
    <text evidence="1">Essential cell division protein that stabilizes the FtsZ protofilaments by cross-linking them and that serves as a cytoplasmic membrane anchor for the Z ring. Also required for the recruitment to the septal ring of downstream cell division proteins.</text>
</comment>
<comment type="subunit">
    <text evidence="1">Interacts with FtsZ via their C-terminal domains.</text>
</comment>
<comment type="subcellular location">
    <subcellularLocation>
        <location evidence="1">Cell inner membrane</location>
        <topology evidence="1">Single-pass type I membrane protein</topology>
    </subcellularLocation>
    <text evidence="1">Localizes to the Z ring in an FtsZ-dependent manner.</text>
</comment>
<comment type="similarity">
    <text evidence="1">Belongs to the ZipA family.</text>
</comment>
<feature type="chain" id="PRO_1000015157" description="Cell division protein ZipA">
    <location>
        <begin position="1"/>
        <end position="342"/>
    </location>
</feature>
<feature type="topological domain" description="Periplasmic" evidence="1">
    <location>
        <begin position="1"/>
        <end position="6"/>
    </location>
</feature>
<feature type="transmembrane region" description="Helical" evidence="1">
    <location>
        <begin position="7"/>
        <end position="27"/>
    </location>
</feature>
<feature type="topological domain" description="Cytoplasmic" evidence="1">
    <location>
        <begin position="28"/>
        <end position="342"/>
    </location>
</feature>
<feature type="region of interest" description="Disordered" evidence="2">
    <location>
        <begin position="33"/>
        <end position="57"/>
    </location>
</feature>
<feature type="compositionally biased region" description="Basic and acidic residues" evidence="2">
    <location>
        <begin position="47"/>
        <end position="57"/>
    </location>
</feature>
<dbReference type="EMBL" id="CP000681">
    <property type="protein sequence ID" value="ABP76086.1"/>
    <property type="molecule type" value="Genomic_DNA"/>
</dbReference>
<dbReference type="SMR" id="A4Y803"/>
<dbReference type="STRING" id="319224.Sputcn32_2365"/>
<dbReference type="KEGG" id="spc:Sputcn32_2365"/>
<dbReference type="eggNOG" id="COG3115">
    <property type="taxonomic scope" value="Bacteria"/>
</dbReference>
<dbReference type="HOGENOM" id="CLU_030174_1_0_6"/>
<dbReference type="GO" id="GO:0032153">
    <property type="term" value="C:cell division site"/>
    <property type="evidence" value="ECO:0007669"/>
    <property type="project" value="UniProtKB-UniRule"/>
</dbReference>
<dbReference type="GO" id="GO:0005886">
    <property type="term" value="C:plasma membrane"/>
    <property type="evidence" value="ECO:0007669"/>
    <property type="project" value="UniProtKB-SubCell"/>
</dbReference>
<dbReference type="GO" id="GO:0000917">
    <property type="term" value="P:division septum assembly"/>
    <property type="evidence" value="ECO:0007669"/>
    <property type="project" value="TreeGrafter"/>
</dbReference>
<dbReference type="GO" id="GO:0043093">
    <property type="term" value="P:FtsZ-dependent cytokinesis"/>
    <property type="evidence" value="ECO:0007669"/>
    <property type="project" value="UniProtKB-UniRule"/>
</dbReference>
<dbReference type="FunFam" id="3.30.1400.10:FF:000001">
    <property type="entry name" value="Cell division protein ZipA"/>
    <property type="match status" value="1"/>
</dbReference>
<dbReference type="Gene3D" id="3.30.1400.10">
    <property type="entry name" value="ZipA, C-terminal FtsZ-binding domain"/>
    <property type="match status" value="1"/>
</dbReference>
<dbReference type="HAMAP" id="MF_00509">
    <property type="entry name" value="ZipA"/>
    <property type="match status" value="1"/>
</dbReference>
<dbReference type="InterPro" id="IPR011919">
    <property type="entry name" value="Cell_div_ZipA"/>
</dbReference>
<dbReference type="InterPro" id="IPR007449">
    <property type="entry name" value="ZipA_FtsZ-bd_C"/>
</dbReference>
<dbReference type="InterPro" id="IPR036765">
    <property type="entry name" value="ZipA_FtsZ-bd_C_sf"/>
</dbReference>
<dbReference type="NCBIfam" id="TIGR02205">
    <property type="entry name" value="septum_zipA"/>
    <property type="match status" value="1"/>
</dbReference>
<dbReference type="PANTHER" id="PTHR38685">
    <property type="entry name" value="CELL DIVISION PROTEIN ZIPA"/>
    <property type="match status" value="1"/>
</dbReference>
<dbReference type="PANTHER" id="PTHR38685:SF1">
    <property type="entry name" value="CELL DIVISION PROTEIN ZIPA"/>
    <property type="match status" value="1"/>
</dbReference>
<dbReference type="Pfam" id="PF04354">
    <property type="entry name" value="ZipA_C"/>
    <property type="match status" value="1"/>
</dbReference>
<dbReference type="SMART" id="SM00771">
    <property type="entry name" value="ZipA_C"/>
    <property type="match status" value="1"/>
</dbReference>
<dbReference type="SUPFAM" id="SSF64383">
    <property type="entry name" value="Cell-division protein ZipA, C-terminal domain"/>
    <property type="match status" value="1"/>
</dbReference>
<protein>
    <recommendedName>
        <fullName evidence="1">Cell division protein ZipA</fullName>
    </recommendedName>
</protein>
<gene>
    <name evidence="1" type="primary">zipA</name>
    <name type="ordered locus">Sputcn32_2365</name>
</gene>
<proteinExistence type="inferred from homology"/>
<organism>
    <name type="scientific">Shewanella putrefaciens (strain CN-32 / ATCC BAA-453)</name>
    <dbReference type="NCBI Taxonomy" id="319224"/>
    <lineage>
        <taxon>Bacteria</taxon>
        <taxon>Pseudomonadati</taxon>
        <taxon>Pseudomonadota</taxon>
        <taxon>Gammaproteobacteria</taxon>
        <taxon>Alteromonadales</taxon>
        <taxon>Shewanellaceae</taxon>
        <taxon>Shewanella</taxon>
    </lineage>
</organism>
<sequence>MEDLQLVLFILGAIAIVAVLVHGFWSIRRQQPKSLKDSPMGNFYKQQADKESPPKRVDADGFDADGIGAVRVRKVGESNSHETPPISPYLKQDVKAEPKPLFKHTTSTEIKQEPVPQPDFSLQSPLATEQQRGAKVSRQEPVLNGHVPPLGQSHAAMVAQKALEQEKHAQSTTVPTQTALFDEDAYLENTESEDEYVEETVDEGLDEPRDVLVLHVVAKEGQQLNGAELLPCFLTLNFKYGDMNIFHRHVDNAGNGKVLFSIANMLKPGVFDPDNMEQFSTQGVVFFMTLPCYGDALMNFSIMLNSARQLADDIDAVVLDGQRQPWGEFTKQDYLHRIRANA</sequence>